<name>MGTC_SALPA</name>
<proteinExistence type="inferred from homology"/>
<comment type="function">
    <text evidence="1">Virulence factor required for growth in low Mg(2+) medium and for intramacrophage survival. May be involved in regulating membrane potential by activating Na(+)/K(+)-ATPase (By similarity).</text>
</comment>
<comment type="subcellular location">
    <subcellularLocation>
        <location evidence="3">Cell inner membrane</location>
        <topology evidence="3">Multi-pass membrane protein</topology>
    </subcellularLocation>
</comment>
<comment type="similarity">
    <text evidence="3">Belongs to the MgtC/SapB family.</text>
</comment>
<protein>
    <recommendedName>
        <fullName>Protein MgtC</fullName>
    </recommendedName>
</protein>
<dbReference type="EMBL" id="CP000026">
    <property type="protein sequence ID" value="AAV79412.1"/>
    <property type="molecule type" value="Genomic_DNA"/>
</dbReference>
<dbReference type="RefSeq" id="WP_000392696.1">
    <property type="nucleotide sequence ID" value="NC_006511.1"/>
</dbReference>
<dbReference type="SMR" id="Q5PC53"/>
<dbReference type="KEGG" id="spt:SPA3614"/>
<dbReference type="HOGENOM" id="CLU_079292_0_0_6"/>
<dbReference type="Proteomes" id="UP000008185">
    <property type="component" value="Chromosome"/>
</dbReference>
<dbReference type="GO" id="GO:0005886">
    <property type="term" value="C:plasma membrane"/>
    <property type="evidence" value="ECO:0007669"/>
    <property type="project" value="UniProtKB-SubCell"/>
</dbReference>
<dbReference type="Gene3D" id="3.30.70.260">
    <property type="match status" value="1"/>
</dbReference>
<dbReference type="InterPro" id="IPR048640">
    <property type="entry name" value="MgtC-like_C"/>
</dbReference>
<dbReference type="InterPro" id="IPR003416">
    <property type="entry name" value="MgtC/SapB/SrpB/YhiD_fam"/>
</dbReference>
<dbReference type="InterPro" id="IPR049177">
    <property type="entry name" value="MgtC_SapB_SrpB_YhiD_N"/>
</dbReference>
<dbReference type="NCBIfam" id="NF011912">
    <property type="entry name" value="PRK15385.1"/>
    <property type="match status" value="1"/>
</dbReference>
<dbReference type="PANTHER" id="PTHR33778">
    <property type="entry name" value="PROTEIN MGTC"/>
    <property type="match status" value="1"/>
</dbReference>
<dbReference type="PANTHER" id="PTHR33778:SF3">
    <property type="entry name" value="PROTEIN MGTC"/>
    <property type="match status" value="1"/>
</dbReference>
<dbReference type="Pfam" id="PF02308">
    <property type="entry name" value="MgtC"/>
    <property type="match status" value="1"/>
</dbReference>
<dbReference type="Pfam" id="PF21770">
    <property type="entry name" value="MgtC_SapB_C"/>
    <property type="match status" value="1"/>
</dbReference>
<dbReference type="PRINTS" id="PR01837">
    <property type="entry name" value="MGTCSAPBPROT"/>
</dbReference>
<feature type="chain" id="PRO_0000250528" description="Protein MgtC">
    <location>
        <begin position="1"/>
        <end position="231"/>
    </location>
</feature>
<feature type="transmembrane region" description="Helical" evidence="2">
    <location>
        <begin position="5"/>
        <end position="25"/>
    </location>
</feature>
<feature type="transmembrane region" description="Helical" evidence="2">
    <location>
        <begin position="39"/>
        <end position="59"/>
    </location>
</feature>
<feature type="transmembrane region" description="Helical" evidence="2">
    <location>
        <begin position="62"/>
        <end position="82"/>
    </location>
</feature>
<feature type="transmembrane region" description="Helical" evidence="2">
    <location>
        <begin position="103"/>
        <end position="123"/>
    </location>
</feature>
<accession>Q5PC53</accession>
<sequence length="231" mass="25081">MEERMLMFPYILNLLAAMLLGALIGAERQWRQRMAGLRTNALVATGAAVFILSSMTTSPDSPGRIAAQIVSGIGFLGAGVIMREGMNVRGLNTAATLWCSAGIGVLCGLGQFKNALAATIIILCANILLREAAQRINQLPVSAEAEKRYILKVTCNKEDESAVRQWLLNIVKEAAICLQGLGSVPAQEQGYKEIRAELVGHADYRKTRELIISRIGDNDNITAIHWCIDSQ</sequence>
<evidence type="ECO:0000250" key="1"/>
<evidence type="ECO:0000255" key="2"/>
<evidence type="ECO:0000305" key="3"/>
<organism>
    <name type="scientific">Salmonella paratyphi A (strain ATCC 9150 / SARB42)</name>
    <dbReference type="NCBI Taxonomy" id="295319"/>
    <lineage>
        <taxon>Bacteria</taxon>
        <taxon>Pseudomonadati</taxon>
        <taxon>Pseudomonadota</taxon>
        <taxon>Gammaproteobacteria</taxon>
        <taxon>Enterobacterales</taxon>
        <taxon>Enterobacteriaceae</taxon>
        <taxon>Salmonella</taxon>
    </lineage>
</organism>
<gene>
    <name type="primary">mgtC</name>
    <name type="ordered locus">SPA3614</name>
</gene>
<keyword id="KW-0997">Cell inner membrane</keyword>
<keyword id="KW-1003">Cell membrane</keyword>
<keyword id="KW-0472">Membrane</keyword>
<keyword id="KW-0812">Transmembrane</keyword>
<keyword id="KW-1133">Transmembrane helix</keyword>
<keyword id="KW-0843">Virulence</keyword>
<reference key="1">
    <citation type="journal article" date="2004" name="Nat. Genet.">
        <title>Comparison of genome degradation in Paratyphi A and Typhi, human-restricted serovars of Salmonella enterica that cause typhoid.</title>
        <authorList>
            <person name="McClelland M."/>
            <person name="Sanderson K.E."/>
            <person name="Clifton S.W."/>
            <person name="Latreille P."/>
            <person name="Porwollik S."/>
            <person name="Sabo A."/>
            <person name="Meyer R."/>
            <person name="Bieri T."/>
            <person name="Ozersky P."/>
            <person name="McLellan M."/>
            <person name="Harkins C.R."/>
            <person name="Wang C."/>
            <person name="Nguyen C."/>
            <person name="Berghoff A."/>
            <person name="Elliott G."/>
            <person name="Kohlberg S."/>
            <person name="Strong C."/>
            <person name="Du F."/>
            <person name="Carter J."/>
            <person name="Kremizki C."/>
            <person name="Layman D."/>
            <person name="Leonard S."/>
            <person name="Sun H."/>
            <person name="Fulton L."/>
            <person name="Nash W."/>
            <person name="Miner T."/>
            <person name="Minx P."/>
            <person name="Delehaunty K."/>
            <person name="Fronick C."/>
            <person name="Magrini V."/>
            <person name="Nhan M."/>
            <person name="Warren W."/>
            <person name="Florea L."/>
            <person name="Spieth J."/>
            <person name="Wilson R.K."/>
        </authorList>
    </citation>
    <scope>NUCLEOTIDE SEQUENCE [LARGE SCALE GENOMIC DNA]</scope>
    <source>
        <strain>ATCC 9150 / SARB42</strain>
    </source>
</reference>